<accession>P30972</accession>
<protein>
    <recommendedName>
        <fullName>Gonadotropin subunit beta-2</fullName>
    </recommendedName>
    <alternativeName>
        <fullName>GTH-II-beta</fullName>
    </alternativeName>
    <alternativeName>
        <fullName>Gonadotropin beta-II chain</fullName>
    </alternativeName>
</protein>
<organism>
    <name type="scientific">Fundulus heteroclitus</name>
    <name type="common">Killifish</name>
    <name type="synonym">Mummichog</name>
    <dbReference type="NCBI Taxonomy" id="8078"/>
    <lineage>
        <taxon>Eukaryota</taxon>
        <taxon>Metazoa</taxon>
        <taxon>Chordata</taxon>
        <taxon>Craniata</taxon>
        <taxon>Vertebrata</taxon>
        <taxon>Euteleostomi</taxon>
        <taxon>Actinopterygii</taxon>
        <taxon>Neopterygii</taxon>
        <taxon>Teleostei</taxon>
        <taxon>Neoteleostei</taxon>
        <taxon>Acanthomorphata</taxon>
        <taxon>Ovalentaria</taxon>
        <taxon>Atherinomorphae</taxon>
        <taxon>Cyprinodontiformes</taxon>
        <taxon>Fundulidae</taxon>
        <taxon>Fundulus</taxon>
    </lineage>
</organism>
<sequence>MVCLFLGASSFIWSLAPAAAAFQLPRCQLLNQTISLEKRGCSGCHRVETTICSGYCATKDPNYKTSYNKAIQHVCTYGDLYYKTFEFPECVPGVDPVVTYPVALSCRCGGCAMATSDCTFESLQPDFCMNDIPFYH</sequence>
<proteinExistence type="evidence at transcript level"/>
<reference key="1">
    <citation type="journal article" date="1992" name="Mol. Cell. Endocrinol.">
        <title>Fundulus heteroclitus gonadotropins. 3. Cloning and sequencing of gonadotropic hormone (GTH) I and II beta-subunits using the polymerase chain reaction.</title>
        <authorList>
            <person name="Lin Y.-W.P."/>
            <person name="Rupnow B.A."/>
            <person name="Price D.A."/>
            <person name="Greenberg R.M."/>
            <person name="Wallace R.A."/>
        </authorList>
    </citation>
    <scope>NUCLEOTIDE SEQUENCE [MRNA]</scope>
    <source>
        <tissue>Pituitary</tissue>
    </source>
</reference>
<dbReference type="EMBL" id="M87015">
    <property type="protein sequence ID" value="AAB59963.1"/>
    <property type="molecule type" value="mRNA"/>
</dbReference>
<dbReference type="PIR" id="I50554">
    <property type="entry name" value="I50554"/>
</dbReference>
<dbReference type="RefSeq" id="NP_001296857.1">
    <property type="nucleotide sequence ID" value="NM_001309928.1"/>
</dbReference>
<dbReference type="SMR" id="P30972"/>
<dbReference type="STRING" id="8078.ENSFHEP00000010305"/>
<dbReference type="GlyCosmos" id="P30972">
    <property type="glycosylation" value="1 site, No reported glycans"/>
</dbReference>
<dbReference type="GeneID" id="105933358"/>
<dbReference type="CTD" id="3972"/>
<dbReference type="OrthoDB" id="8453657at2759"/>
<dbReference type="Proteomes" id="UP000265000">
    <property type="component" value="Whole Genome Shotgun Assembly"/>
</dbReference>
<dbReference type="GO" id="GO:0005737">
    <property type="term" value="C:cytoplasm"/>
    <property type="evidence" value="ECO:0007669"/>
    <property type="project" value="TreeGrafter"/>
</dbReference>
<dbReference type="GO" id="GO:0005615">
    <property type="term" value="C:extracellular space"/>
    <property type="evidence" value="ECO:0007669"/>
    <property type="project" value="TreeGrafter"/>
</dbReference>
<dbReference type="GO" id="GO:0005179">
    <property type="term" value="F:hormone activity"/>
    <property type="evidence" value="ECO:0007669"/>
    <property type="project" value="UniProtKB-KW"/>
</dbReference>
<dbReference type="GO" id="GO:0007186">
    <property type="term" value="P:G protein-coupled receptor signaling pathway"/>
    <property type="evidence" value="ECO:0007669"/>
    <property type="project" value="TreeGrafter"/>
</dbReference>
<dbReference type="GO" id="GO:0030728">
    <property type="term" value="P:ovulation"/>
    <property type="evidence" value="ECO:0007669"/>
    <property type="project" value="TreeGrafter"/>
</dbReference>
<dbReference type="CDD" id="cd00069">
    <property type="entry name" value="GHB_like"/>
    <property type="match status" value="1"/>
</dbReference>
<dbReference type="FunFam" id="2.10.90.10:FF:000007">
    <property type="entry name" value="Luteinizing hormone beta subunit"/>
    <property type="match status" value="1"/>
</dbReference>
<dbReference type="Gene3D" id="2.10.90.10">
    <property type="entry name" value="Cystine-knot cytokines"/>
    <property type="match status" value="1"/>
</dbReference>
<dbReference type="InterPro" id="IPR029034">
    <property type="entry name" value="Cystine-knot_cytokine"/>
</dbReference>
<dbReference type="InterPro" id="IPR006208">
    <property type="entry name" value="Glyco_hormone_CN"/>
</dbReference>
<dbReference type="InterPro" id="IPR001545">
    <property type="entry name" value="Gonadotropin_bsu"/>
</dbReference>
<dbReference type="InterPro" id="IPR018245">
    <property type="entry name" value="Gonadotropin_bsu_CS"/>
</dbReference>
<dbReference type="PANTHER" id="PTHR11515">
    <property type="entry name" value="GLYCOPROTEIN HORMONE BETA CHAIN"/>
    <property type="match status" value="1"/>
</dbReference>
<dbReference type="PANTHER" id="PTHR11515:SF11">
    <property type="entry name" value="LUTROPIN SUBUNIT BETA"/>
    <property type="match status" value="1"/>
</dbReference>
<dbReference type="Pfam" id="PF00007">
    <property type="entry name" value="Cys_knot"/>
    <property type="match status" value="1"/>
</dbReference>
<dbReference type="SMART" id="SM00068">
    <property type="entry name" value="GHB"/>
    <property type="match status" value="1"/>
</dbReference>
<dbReference type="SUPFAM" id="SSF57501">
    <property type="entry name" value="Cystine-knot cytokines"/>
    <property type="match status" value="1"/>
</dbReference>
<dbReference type="PROSITE" id="PS00261">
    <property type="entry name" value="GLYCO_HORMONE_BETA_1"/>
    <property type="match status" value="1"/>
</dbReference>
<dbReference type="PROSITE" id="PS00689">
    <property type="entry name" value="GLYCO_HORMONE_BETA_2"/>
    <property type="match status" value="1"/>
</dbReference>
<feature type="signal peptide" evidence="2">
    <location>
        <begin position="1"/>
        <end position="21"/>
    </location>
</feature>
<feature type="chain" id="PRO_0000011692" description="Gonadotropin subunit beta-2">
    <location>
        <begin position="22"/>
        <end position="136"/>
    </location>
</feature>
<feature type="glycosylation site" description="N-linked (GlcNAc...) asparagine" evidence="2">
    <location>
        <position position="31"/>
    </location>
</feature>
<feature type="disulfide bond" evidence="1">
    <location>
        <begin position="27"/>
        <end position="75"/>
    </location>
</feature>
<feature type="disulfide bond" evidence="1">
    <location>
        <begin position="41"/>
        <end position="90"/>
    </location>
</feature>
<feature type="disulfide bond" evidence="1">
    <location>
        <begin position="44"/>
        <end position="128"/>
    </location>
</feature>
<feature type="disulfide bond" evidence="1">
    <location>
        <begin position="52"/>
        <end position="106"/>
    </location>
</feature>
<feature type="disulfide bond" evidence="1">
    <location>
        <begin position="56"/>
        <end position="108"/>
    </location>
</feature>
<feature type="disulfide bond" evidence="1">
    <location>
        <begin position="111"/>
        <end position="118"/>
    </location>
</feature>
<evidence type="ECO:0000250" key="1"/>
<evidence type="ECO:0000255" key="2"/>
<evidence type="ECO:0000305" key="3"/>
<comment type="function">
    <text>Involved in gametogenesis and steroidogenesis.</text>
</comment>
<comment type="subunit">
    <text>Heterodimer of an alpha and a beta chain.</text>
</comment>
<comment type="subcellular location">
    <subcellularLocation>
        <location>Secreted</location>
    </subcellularLocation>
</comment>
<comment type="similarity">
    <text evidence="3">Belongs to the glycoprotein hormones subunit beta family.</text>
</comment>
<name>GTHB2_FUNHE</name>
<gene>
    <name type="primary">cgbb</name>
</gene>
<keyword id="KW-1015">Disulfide bond</keyword>
<keyword id="KW-0325">Glycoprotein</keyword>
<keyword id="KW-0372">Hormone</keyword>
<keyword id="KW-0964">Secreted</keyword>
<keyword id="KW-0732">Signal</keyword>